<organism>
    <name type="scientific">Staphylococcus aureus (strain Mu50 / ATCC 700699)</name>
    <dbReference type="NCBI Taxonomy" id="158878"/>
    <lineage>
        <taxon>Bacteria</taxon>
        <taxon>Bacillati</taxon>
        <taxon>Bacillota</taxon>
        <taxon>Bacilli</taxon>
        <taxon>Bacillales</taxon>
        <taxon>Staphylococcaceae</taxon>
        <taxon>Staphylococcus</taxon>
    </lineage>
</organism>
<dbReference type="EMBL" id="BA000017">
    <property type="protein sequence ID" value="BAB57624.1"/>
    <property type="molecule type" value="Genomic_DNA"/>
</dbReference>
<dbReference type="RefSeq" id="WP_000005212.1">
    <property type="nucleotide sequence ID" value="NC_002758.2"/>
</dbReference>
<dbReference type="SMR" id="P67759"/>
<dbReference type="KEGG" id="sav:SAV1462"/>
<dbReference type="HOGENOM" id="CLU_122408_0_0_9"/>
<dbReference type="PhylomeDB" id="P67759"/>
<dbReference type="Proteomes" id="UP000002481">
    <property type="component" value="Chromosome"/>
</dbReference>
<dbReference type="Gene3D" id="3.40.1530.30">
    <property type="entry name" value="Uncharacterised family UPF0302, N-terminal domain"/>
    <property type="match status" value="1"/>
</dbReference>
<dbReference type="HAMAP" id="MF_00760">
    <property type="entry name" value="UPF0302"/>
    <property type="match status" value="1"/>
</dbReference>
<dbReference type="InterPro" id="IPR014957">
    <property type="entry name" value="IDEAL_dom"/>
</dbReference>
<dbReference type="InterPro" id="IPR011188">
    <property type="entry name" value="UPF0302"/>
</dbReference>
<dbReference type="InterPro" id="IPR014963">
    <property type="entry name" value="UPF0302_N"/>
</dbReference>
<dbReference type="InterPro" id="IPR038091">
    <property type="entry name" value="UPF0302_N_sf"/>
</dbReference>
<dbReference type="Pfam" id="PF08858">
    <property type="entry name" value="IDEAL"/>
    <property type="match status" value="1"/>
</dbReference>
<dbReference type="Pfam" id="PF08864">
    <property type="entry name" value="UPF0302"/>
    <property type="match status" value="1"/>
</dbReference>
<dbReference type="PIRSF" id="PIRSF007165">
    <property type="entry name" value="UCP007165"/>
    <property type="match status" value="1"/>
</dbReference>
<dbReference type="SMART" id="SM00914">
    <property type="entry name" value="IDEAL"/>
    <property type="match status" value="1"/>
</dbReference>
<accession>P67759</accession>
<accession>Q99U27</accession>
<reference key="1">
    <citation type="journal article" date="2001" name="Lancet">
        <title>Whole genome sequencing of meticillin-resistant Staphylococcus aureus.</title>
        <authorList>
            <person name="Kuroda M."/>
            <person name="Ohta T."/>
            <person name="Uchiyama I."/>
            <person name="Baba T."/>
            <person name="Yuzawa H."/>
            <person name="Kobayashi I."/>
            <person name="Cui L."/>
            <person name="Oguchi A."/>
            <person name="Aoki K."/>
            <person name="Nagai Y."/>
            <person name="Lian J.-Q."/>
            <person name="Ito T."/>
            <person name="Kanamori M."/>
            <person name="Matsumaru H."/>
            <person name="Maruyama A."/>
            <person name="Murakami H."/>
            <person name="Hosoyama A."/>
            <person name="Mizutani-Ui Y."/>
            <person name="Takahashi N.K."/>
            <person name="Sawano T."/>
            <person name="Inoue R."/>
            <person name="Kaito C."/>
            <person name="Sekimizu K."/>
            <person name="Hirakawa H."/>
            <person name="Kuhara S."/>
            <person name="Goto S."/>
            <person name="Yabuzaki J."/>
            <person name="Kanehisa M."/>
            <person name="Yamashita A."/>
            <person name="Oshima K."/>
            <person name="Furuya K."/>
            <person name="Yoshino C."/>
            <person name="Shiba T."/>
            <person name="Hattori M."/>
            <person name="Ogasawara N."/>
            <person name="Hayashi H."/>
            <person name="Hiramatsu K."/>
        </authorList>
    </citation>
    <scope>NUCLEOTIDE SEQUENCE [LARGE SCALE GENOMIC DNA]</scope>
    <source>
        <strain>Mu50 / ATCC 700699</strain>
    </source>
</reference>
<comment type="similarity">
    <text evidence="1">Belongs to the UPF0302 family.</text>
</comment>
<sequence length="191" mass="22564">MSETLNQIKESFIEYLLFQYRFKSRIAVWVLNYIKVNEAKLANIHFVDTKINHHETLEIAEVGSHASAIQFTKRNIKLMNTNEIFDYIANHNCAFDIQIHFANVSKREQRLDDLIVAQLTESPSYQTYLHDLNSMAIDRHKHALLIDYLLHNIDLSLQMNEKQRFYQLTQILNTLKLVNKHNQFEDLADDD</sequence>
<feature type="chain" id="PRO_0000216105" description="UPF0302 protein SAV1462">
    <location>
        <begin position="1"/>
        <end position="191"/>
    </location>
</feature>
<gene>
    <name type="ordered locus">SAV1462</name>
</gene>
<protein>
    <recommendedName>
        <fullName evidence="1">UPF0302 protein SAV1462</fullName>
    </recommendedName>
</protein>
<name>Y1462_STAAM</name>
<proteinExistence type="inferred from homology"/>
<evidence type="ECO:0000255" key="1">
    <source>
        <dbReference type="HAMAP-Rule" id="MF_00760"/>
    </source>
</evidence>